<gene>
    <name type="primary">phnB</name>
</gene>
<feature type="chain" id="PRO_0000424348" description="Cis-3,4-dihydrophenanthrene-3,4-diol dehydrogenase">
    <location>
        <begin position="1"/>
        <end position="277"/>
    </location>
</feature>
<feature type="active site" description="Proton acceptor" evidence="2">
    <location>
        <position position="156"/>
    </location>
</feature>
<feature type="binding site" evidence="1">
    <location>
        <begin position="10"/>
        <end position="37"/>
    </location>
    <ligand>
        <name>NAD(+)</name>
        <dbReference type="ChEBI" id="CHEBI:57540"/>
    </ligand>
</feature>
<feature type="binding site" evidence="1">
    <location>
        <position position="60"/>
    </location>
    <ligand>
        <name>NAD(+)</name>
        <dbReference type="ChEBI" id="CHEBI:57540"/>
    </ligand>
</feature>
<feature type="binding site" evidence="1">
    <location>
        <position position="143"/>
    </location>
    <ligand>
        <name>substrate</name>
    </ligand>
</feature>
<feature type="binding site" evidence="1">
    <location>
        <position position="160"/>
    </location>
    <ligand>
        <name>NAD(+)</name>
        <dbReference type="ChEBI" id="CHEBI:57540"/>
    </ligand>
</feature>
<reference key="1">
    <citation type="submission" date="1999-03" db="EMBL/GenBank/DDBJ databases">
        <title>A phenanthrene degradative gene cluster in Alcaligenes faecalis AFK2.</title>
        <authorList>
            <person name="Kiyohara H."/>
            <person name="Tabata Y."/>
            <person name="Takizawa N."/>
        </authorList>
    </citation>
    <scope>NUCLEOTIDE SEQUENCE [GENOMIC DNA]</scope>
    <source>
        <strain>AFK2</strain>
    </source>
</reference>
<reference key="2">
    <citation type="journal article" date="1988" name="Agric. Biol. Chem.">
        <title>Purification and properties of cis-phenanthrene dihydrodiol dehydrogenase in Alcaligenes faecalis AFK2.</title>
        <authorList>
            <person name="Nagao K."/>
            <person name="Takizawa N."/>
            <person name="Kiyohara H."/>
        </authorList>
    </citation>
    <scope>FUNCTION</scope>
    <scope>CATALYTIC ACTIVITY</scope>
    <scope>BIOPHYSICOCHEMICAL PROPERTIES</scope>
    <scope>ACTIVITY REGULATION</scope>
    <scope>SUBSTRATE SPECIFICITY</scope>
    <scope>SUBUNIT</scope>
    <source>
        <strain>AFK2</strain>
    </source>
</reference>
<accession>Q9WXG7</accession>
<proteinExistence type="evidence at protein level"/>
<name>DPDD_ALCFA</name>
<sequence length="277" mass="28827">MAWLEGQSVFLTGGVAGLGRALVKRLVEEGANVTVLDRNARGLDELVESFKGRVAGSPGDVRNLADNRKAVELAVERFGKLDTFNRQRRHLGLLCPPCRPAGRCHQRSFDEVIGINLMGYVMGIKAAAPALVRSRGSVILTLSSSAFYAGGGGVLYTVAKHAAVGLIKQAAHELAPYVRVNGVAPGGIASDLRGPKSLGMGEQSITSVPLADLVKDIAPIGRLSDTEEYTGSYVYLASARNSAPATGVIINCDGGMGVRSVLGPASGGKGLLEKFGG</sequence>
<comment type="function">
    <text evidence="3">Involved in the degradation of phenanthrene. Catalyzes the oxidation of cis-phenanthrene dihydrodiol (PDD) to yield phenanthrenediol. It can use either NAD or NADP as electron acceptor, however NAD is preferred to NADP.</text>
</comment>
<comment type="catalytic activity">
    <reaction evidence="3">
        <text>(3S,4R)-3,4-dihydrophenanthrene-3,4-diol + NAD(+) = phenanthrene-3,4-diol + NADH + H(+)</text>
        <dbReference type="Rhea" id="RHEA:16253"/>
        <dbReference type="ChEBI" id="CHEBI:15378"/>
        <dbReference type="ChEBI" id="CHEBI:15386"/>
        <dbReference type="ChEBI" id="CHEBI:16760"/>
        <dbReference type="ChEBI" id="CHEBI:57540"/>
        <dbReference type="ChEBI" id="CHEBI:57945"/>
        <dbReference type="EC" id="1.3.1.49"/>
    </reaction>
</comment>
<comment type="activity regulation">
    <text evidence="3">Inhibited by heavy metal such as Hg(2+) and by p-chloromercuribenzoate.</text>
</comment>
<comment type="biophysicochemical properties">
    <kinetics>
        <KM evidence="3">210 uM for PDD (at pH 9 and 30 degrees Celsius)</KM>
        <KM evidence="3">580 uM for NAD (at pH 9 and 30 degrees Celsius)</KM>
        <KM evidence="3">6.3 mM for NADP (at pH 9 and 30 degrees Celsius)</KM>
    </kinetics>
    <phDependence>
        <text evidence="3">Optimum pH is 9.</text>
    </phDependence>
    <temperatureDependence>
        <text evidence="3">Optimum temperature is 40 degrees Celsius.</text>
    </temperatureDependence>
</comment>
<comment type="subunit">
    <text evidence="3">Homotetramer.</text>
</comment>
<comment type="similarity">
    <text evidence="4">Belongs to the short-chain dehydrogenases/reductases (SDR) family.</text>
</comment>
<protein>
    <recommendedName>
        <fullName>Cis-3,4-dihydrophenanthrene-3,4-diol dehydrogenase</fullName>
        <ecNumber>1.3.1.49</ecNumber>
    </recommendedName>
    <alternativeName>
        <fullName>Cis-phenanthrene dihydrodiol dehydrogenase</fullName>
        <shortName>PDD dehydrogenase</shortName>
    </alternativeName>
</protein>
<organism>
    <name type="scientific">Alcaligenes faecalis</name>
    <dbReference type="NCBI Taxonomy" id="511"/>
    <lineage>
        <taxon>Bacteria</taxon>
        <taxon>Pseudomonadati</taxon>
        <taxon>Pseudomonadota</taxon>
        <taxon>Betaproteobacteria</taxon>
        <taxon>Burkholderiales</taxon>
        <taxon>Alcaligenaceae</taxon>
        <taxon>Alcaligenes</taxon>
    </lineage>
</organism>
<keyword id="KW-0058">Aromatic hydrocarbons catabolism</keyword>
<keyword id="KW-0520">NAD</keyword>
<keyword id="KW-0521">NADP</keyword>
<keyword id="KW-0560">Oxidoreductase</keyword>
<evidence type="ECO:0000250" key="1"/>
<evidence type="ECO:0000255" key="2">
    <source>
        <dbReference type="PROSITE-ProRule" id="PRU10001"/>
    </source>
</evidence>
<evidence type="ECO:0000269" key="3">
    <source ref="2"/>
</evidence>
<evidence type="ECO:0000305" key="4"/>
<dbReference type="EC" id="1.3.1.49"/>
<dbReference type="EMBL" id="AB024945">
    <property type="protein sequence ID" value="BAA76322.1"/>
    <property type="molecule type" value="Genomic_DNA"/>
</dbReference>
<dbReference type="SMR" id="Q9WXG7"/>
<dbReference type="GO" id="GO:0018507">
    <property type="term" value="F:cis-3,4-dihydrophenanthrene-3,4-diol dehydrogenase activity"/>
    <property type="evidence" value="ECO:0000314"/>
    <property type="project" value="UniProtKB"/>
</dbReference>
<dbReference type="GO" id="GO:0042216">
    <property type="term" value="P:phenanthrene catabolic process"/>
    <property type="evidence" value="ECO:0000314"/>
    <property type="project" value="UniProtKB"/>
</dbReference>
<dbReference type="Gene3D" id="3.40.50.720">
    <property type="entry name" value="NAD(P)-binding Rossmann-like Domain"/>
    <property type="match status" value="1"/>
</dbReference>
<dbReference type="InterPro" id="IPR036291">
    <property type="entry name" value="NAD(P)-bd_dom_sf"/>
</dbReference>
<dbReference type="InterPro" id="IPR020904">
    <property type="entry name" value="Sc_DH/Rdtase_CS"/>
</dbReference>
<dbReference type="InterPro" id="IPR002347">
    <property type="entry name" value="SDR_fam"/>
</dbReference>
<dbReference type="PANTHER" id="PTHR43943:SF17">
    <property type="entry name" value="3-PHENYLPROPIONATE-DIHYDRODIOL_CINNAMIC ACID-DIHYDRODIOL DEHYDROGENASE"/>
    <property type="match status" value="1"/>
</dbReference>
<dbReference type="PANTHER" id="PTHR43943">
    <property type="entry name" value="DEHYDROGENASE/REDUCTASE (SDR FAMILY) MEMBER 4"/>
    <property type="match status" value="1"/>
</dbReference>
<dbReference type="Pfam" id="PF00106">
    <property type="entry name" value="adh_short"/>
    <property type="match status" value="1"/>
</dbReference>
<dbReference type="PRINTS" id="PR00081">
    <property type="entry name" value="GDHRDH"/>
</dbReference>
<dbReference type="SUPFAM" id="SSF51735">
    <property type="entry name" value="NAD(P)-binding Rossmann-fold domains"/>
    <property type="match status" value="1"/>
</dbReference>
<dbReference type="PROSITE" id="PS00061">
    <property type="entry name" value="ADH_SHORT"/>
    <property type="match status" value="1"/>
</dbReference>